<organism>
    <name type="scientific">Actinidia deliciosa</name>
    <name type="common">Kiwi</name>
    <dbReference type="NCBI Taxonomy" id="3627"/>
    <lineage>
        <taxon>Eukaryota</taxon>
        <taxon>Viridiplantae</taxon>
        <taxon>Streptophyta</taxon>
        <taxon>Embryophyta</taxon>
        <taxon>Tracheophyta</taxon>
        <taxon>Spermatophyta</taxon>
        <taxon>Magnoliopsida</taxon>
        <taxon>eudicotyledons</taxon>
        <taxon>Gunneridae</taxon>
        <taxon>Pentapetalae</taxon>
        <taxon>asterids</taxon>
        <taxon>Ericales</taxon>
        <taxon>Actinidiaceae</taxon>
        <taxon>Actinidia</taxon>
    </lineage>
</organism>
<comment type="PTM">
    <text evidence="1 2">N-glycosylated.</text>
</comment>
<comment type="mass spectrometry" mass="40007.0" error="2.0" method="MALDI" evidence="1"/>
<comment type="allergen">
    <text evidence="1 2">Causes an allergic reaction in human. Binds IgE from 70% of kiwi-allergic patients.</text>
</comment>
<reference evidence="4" key="1">
    <citation type="journal article" date="2008" name="Clin. Exp. Allergy">
        <title>Immunoglobulin E recognition patterns to purified Kiwifruit (Actinidinia deliciosa) allergens in patients sensitized to Kiwi with different clinical symptoms.</title>
        <authorList>
            <person name="Palacin A."/>
            <person name="Rodriguez J."/>
            <person name="Blanco C."/>
            <person name="Lopez-Torrejon G."/>
            <person name="Sanchez-Monge R."/>
            <person name="Varela J."/>
            <person name="Jimenez M.A."/>
            <person name="Cumplido J."/>
            <person name="Carrillo T."/>
            <person name="Crespo J.F."/>
            <person name="Salcedo G."/>
        </authorList>
    </citation>
    <scope>PROTEIN SEQUENCE OF 1-24</scope>
    <scope>GLYCOSYLATION</scope>
    <scope>MASS SPECTROMETRY</scope>
    <scope>ALLERGEN</scope>
    <source>
        <strain evidence="1">cv. Hayward</strain>
        <tissue evidence="1">Fruit</tissue>
    </source>
</reference>
<reference evidence="4" key="2">
    <citation type="submission" date="2006-11" db="UniProtKB">
        <title>Purification and partial characterisation of a 40 kDa allergen from kiwifruit (Actinidia deliciosa) (Presentation at the XXV Congress of the European Academy of Allergology and Clinical Immunology, 10-14 June 2006, Vienna, Austria).</title>
        <authorList>
            <person name="Bublin M."/>
            <person name="Radauer C."/>
            <person name="Lebens A."/>
            <person name="Knulst A."/>
            <person name="Scheiner O."/>
            <person name="Breiteneder H."/>
        </authorList>
    </citation>
    <scope>PROTEIN SEQUENCE OF 1-15 AND 26-36</scope>
    <scope>GLYCOSYLATION</scope>
    <scope>ALLERGEN</scope>
    <source>
        <tissue>Fruit</tissue>
    </source>
</reference>
<evidence type="ECO:0000269" key="1">
    <source>
    </source>
</evidence>
<evidence type="ECO:0000269" key="2">
    <source ref="2"/>
</evidence>
<evidence type="ECO:0000303" key="3">
    <source>
    </source>
</evidence>
<evidence type="ECO:0000305" key="4"/>
<protein>
    <recommendedName>
        <fullName>Allergen Act d 3</fullName>
    </recommendedName>
    <alternativeName>
        <fullName evidence="3">Allergen Act d 3.01</fullName>
    </alternativeName>
    <alternativeName>
        <fullName evidence="3">Allergen Act d 3.02</fullName>
    </alternativeName>
    <allergenName>Act d 3</allergenName>
</protein>
<proteinExistence type="evidence at protein level"/>
<name>ALLD3_ACTDE</name>
<sequence length="36" mass="4024">FTDGLMKNGNFELAPKPEDMXGTVRVESLKAVKYXD</sequence>
<dbReference type="Allergome" id="3553">
    <property type="allergen name" value="Act d 3"/>
</dbReference>
<dbReference type="Allergome" id="3556">
    <property type="allergen name" value="Act d 3.0101"/>
</dbReference>
<feature type="chain" id="PRO_0000271418" description="Allergen Act d 3">
    <location>
        <begin position="1"/>
        <end position="36" status="greater than"/>
    </location>
</feature>
<feature type="non-consecutive residues" evidence="4">
    <location>
        <begin position="25"/>
        <end position="26"/>
    </location>
</feature>
<feature type="non-terminal residue">
    <location>
        <position position="36"/>
    </location>
</feature>
<accession>P85063</accession>
<accession>P84992</accession>
<keyword id="KW-0020">Allergen</keyword>
<keyword id="KW-0903">Direct protein sequencing</keyword>
<keyword id="KW-0325">Glycoprotein</keyword>